<keyword id="KW-0030">Aminoacyl-tRNA synthetase</keyword>
<keyword id="KW-0067">ATP-binding</keyword>
<keyword id="KW-0963">Cytoplasm</keyword>
<keyword id="KW-0436">Ligase</keyword>
<keyword id="KW-0547">Nucleotide-binding</keyword>
<keyword id="KW-0648">Protein biosynthesis</keyword>
<keyword id="KW-1185">Reference proteome</keyword>
<proteinExistence type="inferred from homology"/>
<sequence>MSKPTADNAPNAAAKGAPAVPANFLRPIIQADLDSGKHSSIVTRFPPEPNGYLHIGHAKSICVNFGLAKEFGGVCHLRFDDTNPAKEDQEYIDAIQSDVKWLGFEWGGDVRYASDYFDQLHDWAVELIKRGKAYVCDLTPEQAKEYRGNLKEPGKNSPFRERSVEENLDLFARMKAGEFKDGERVLRAKIDMASPNMNLRDPILYRIRHAHHHQTGDKWCIYPNYDFTHGQSDAIEGITHSICTLEFEGHRPLYDWFLDNLPVPAHPRQYEFSRLNLNYTITSKRKLKQLVDEKHVDAWDDPRMSTLSGFRRRGYTPASIRNFCEMIGTNRSDGVVDMSMLEFSIRDDLDRTAPRAMCVLRPLKVVITNYPEGQVEQLELPRHPKEDMGVRVLPFSRELYIDRDDFMEEPPKGYKRLEPAGEVRLRGSYVIRADEAIKDADGNIVELRCSYDPDTLGKNPEGRKVKGVIHWVPAEGSVECEVRLYDRLFRSPNPEKTEEGGSFLDNINPASLQVLSGCRAEPSLAQAQPEDRFQFEREGYFCADLKDSQPGRPVFNRTVTLRDSWGS</sequence>
<accession>Q88IU5</accession>
<feature type="chain" id="PRO_0000195844" description="Glutamine--tRNA ligase">
    <location>
        <begin position="1"/>
        <end position="567"/>
    </location>
</feature>
<feature type="short sequence motif" description="'HIGH' region" evidence="1">
    <location>
        <begin position="47"/>
        <end position="57"/>
    </location>
</feature>
<feature type="short sequence motif" description="'KMSKS' region" evidence="1">
    <location>
        <begin position="281"/>
        <end position="285"/>
    </location>
</feature>
<feature type="binding site" evidence="1">
    <location>
        <begin position="48"/>
        <end position="50"/>
    </location>
    <ligand>
        <name>ATP</name>
        <dbReference type="ChEBI" id="CHEBI:30616"/>
    </ligand>
</feature>
<feature type="binding site" evidence="1">
    <location>
        <begin position="54"/>
        <end position="60"/>
    </location>
    <ligand>
        <name>ATP</name>
        <dbReference type="ChEBI" id="CHEBI:30616"/>
    </ligand>
</feature>
<feature type="binding site" evidence="1">
    <location>
        <position position="80"/>
    </location>
    <ligand>
        <name>L-glutamine</name>
        <dbReference type="ChEBI" id="CHEBI:58359"/>
    </ligand>
</feature>
<feature type="binding site" evidence="1">
    <location>
        <position position="225"/>
    </location>
    <ligand>
        <name>L-glutamine</name>
        <dbReference type="ChEBI" id="CHEBI:58359"/>
    </ligand>
</feature>
<feature type="binding site" evidence="1">
    <location>
        <position position="244"/>
    </location>
    <ligand>
        <name>ATP</name>
        <dbReference type="ChEBI" id="CHEBI:30616"/>
    </ligand>
</feature>
<feature type="binding site" evidence="1">
    <location>
        <begin position="274"/>
        <end position="275"/>
    </location>
    <ligand>
        <name>ATP</name>
        <dbReference type="ChEBI" id="CHEBI:30616"/>
    </ligand>
</feature>
<evidence type="ECO:0000255" key="1">
    <source>
        <dbReference type="HAMAP-Rule" id="MF_00126"/>
    </source>
</evidence>
<comment type="catalytic activity">
    <reaction evidence="1">
        <text>tRNA(Gln) + L-glutamine + ATP = L-glutaminyl-tRNA(Gln) + AMP + diphosphate</text>
        <dbReference type="Rhea" id="RHEA:20121"/>
        <dbReference type="Rhea" id="RHEA-COMP:9662"/>
        <dbReference type="Rhea" id="RHEA-COMP:9681"/>
        <dbReference type="ChEBI" id="CHEBI:30616"/>
        <dbReference type="ChEBI" id="CHEBI:33019"/>
        <dbReference type="ChEBI" id="CHEBI:58359"/>
        <dbReference type="ChEBI" id="CHEBI:78442"/>
        <dbReference type="ChEBI" id="CHEBI:78521"/>
        <dbReference type="ChEBI" id="CHEBI:456215"/>
        <dbReference type="EC" id="6.1.1.18"/>
    </reaction>
</comment>
<comment type="subunit">
    <text evidence="1">Monomer.</text>
</comment>
<comment type="subcellular location">
    <subcellularLocation>
        <location evidence="1">Cytoplasm</location>
    </subcellularLocation>
</comment>
<comment type="similarity">
    <text evidence="1">Belongs to the class-I aminoacyl-tRNA synthetase family.</text>
</comment>
<reference key="1">
    <citation type="journal article" date="2002" name="Environ. Microbiol.">
        <title>Complete genome sequence and comparative analysis of the metabolically versatile Pseudomonas putida KT2440.</title>
        <authorList>
            <person name="Nelson K.E."/>
            <person name="Weinel C."/>
            <person name="Paulsen I.T."/>
            <person name="Dodson R.J."/>
            <person name="Hilbert H."/>
            <person name="Martins dos Santos V.A.P."/>
            <person name="Fouts D.E."/>
            <person name="Gill S.R."/>
            <person name="Pop M."/>
            <person name="Holmes M."/>
            <person name="Brinkac L.M."/>
            <person name="Beanan M.J."/>
            <person name="DeBoy R.T."/>
            <person name="Daugherty S.C."/>
            <person name="Kolonay J.F."/>
            <person name="Madupu R."/>
            <person name="Nelson W.C."/>
            <person name="White O."/>
            <person name="Peterson J.D."/>
            <person name="Khouri H.M."/>
            <person name="Hance I."/>
            <person name="Chris Lee P."/>
            <person name="Holtzapple E.K."/>
            <person name="Scanlan D."/>
            <person name="Tran K."/>
            <person name="Moazzez A."/>
            <person name="Utterback T.R."/>
            <person name="Rizzo M."/>
            <person name="Lee K."/>
            <person name="Kosack D."/>
            <person name="Moestl D."/>
            <person name="Wedler H."/>
            <person name="Lauber J."/>
            <person name="Stjepandic D."/>
            <person name="Hoheisel J."/>
            <person name="Straetz M."/>
            <person name="Heim S."/>
            <person name="Kiewitz C."/>
            <person name="Eisen J.A."/>
            <person name="Timmis K.N."/>
            <person name="Duesterhoeft A."/>
            <person name="Tuemmler B."/>
            <person name="Fraser C.M."/>
        </authorList>
    </citation>
    <scope>NUCLEOTIDE SEQUENCE [LARGE SCALE GENOMIC DNA]</scope>
    <source>
        <strain>ATCC 47054 / DSM 6125 / CFBP 8728 / NCIMB 11950 / KT2440</strain>
    </source>
</reference>
<dbReference type="EC" id="6.1.1.18" evidence="1"/>
<dbReference type="EMBL" id="AE015451">
    <property type="protein sequence ID" value="AAN68512.1"/>
    <property type="molecule type" value="Genomic_DNA"/>
</dbReference>
<dbReference type="RefSeq" id="NP_745048.1">
    <property type="nucleotide sequence ID" value="NC_002947.4"/>
</dbReference>
<dbReference type="RefSeq" id="WP_010953806.1">
    <property type="nucleotide sequence ID" value="NZ_CP169744.1"/>
</dbReference>
<dbReference type="SMR" id="Q88IU5"/>
<dbReference type="STRING" id="160488.PP_2904"/>
<dbReference type="PaxDb" id="160488-PP_2904"/>
<dbReference type="KEGG" id="ppu:PP_2904"/>
<dbReference type="PATRIC" id="fig|160488.4.peg.3078"/>
<dbReference type="eggNOG" id="COG0008">
    <property type="taxonomic scope" value="Bacteria"/>
</dbReference>
<dbReference type="HOGENOM" id="CLU_001882_2_3_6"/>
<dbReference type="OrthoDB" id="9801560at2"/>
<dbReference type="PhylomeDB" id="Q88IU5"/>
<dbReference type="BioCyc" id="PPUT160488:G1G01-3083-MONOMER"/>
<dbReference type="Proteomes" id="UP000000556">
    <property type="component" value="Chromosome"/>
</dbReference>
<dbReference type="GO" id="GO:0005829">
    <property type="term" value="C:cytosol"/>
    <property type="evidence" value="ECO:0007669"/>
    <property type="project" value="TreeGrafter"/>
</dbReference>
<dbReference type="GO" id="GO:0005524">
    <property type="term" value="F:ATP binding"/>
    <property type="evidence" value="ECO:0007669"/>
    <property type="project" value="UniProtKB-UniRule"/>
</dbReference>
<dbReference type="GO" id="GO:0004819">
    <property type="term" value="F:glutamine-tRNA ligase activity"/>
    <property type="evidence" value="ECO:0007669"/>
    <property type="project" value="UniProtKB-UniRule"/>
</dbReference>
<dbReference type="GO" id="GO:0006425">
    <property type="term" value="P:glutaminyl-tRNA aminoacylation"/>
    <property type="evidence" value="ECO:0007669"/>
    <property type="project" value="InterPro"/>
</dbReference>
<dbReference type="GO" id="GO:0006424">
    <property type="term" value="P:glutamyl-tRNA aminoacylation"/>
    <property type="evidence" value="ECO:0007669"/>
    <property type="project" value="UniProtKB-UniRule"/>
</dbReference>
<dbReference type="CDD" id="cd00807">
    <property type="entry name" value="GlnRS_core"/>
    <property type="match status" value="1"/>
</dbReference>
<dbReference type="FunFam" id="1.10.1160.10:FF:000001">
    <property type="entry name" value="Glutamine--tRNA ligase"/>
    <property type="match status" value="1"/>
</dbReference>
<dbReference type="FunFam" id="2.40.240.10:FF:000001">
    <property type="entry name" value="Glutamine--tRNA ligase"/>
    <property type="match status" value="1"/>
</dbReference>
<dbReference type="FunFam" id="3.90.800.10:FF:000001">
    <property type="entry name" value="Glutamine--tRNA ligase"/>
    <property type="match status" value="1"/>
</dbReference>
<dbReference type="FunFam" id="3.40.50.620:FF:000037">
    <property type="entry name" value="Glutamine--tRNA ligase cytoplasmic"/>
    <property type="match status" value="1"/>
</dbReference>
<dbReference type="Gene3D" id="1.10.1160.10">
    <property type="entry name" value="Glutamyl-trna Synthetase, Domain 2"/>
    <property type="match status" value="1"/>
</dbReference>
<dbReference type="Gene3D" id="3.90.800.10">
    <property type="entry name" value="Glutamyl-tRNA Synthetase, Domain 3"/>
    <property type="match status" value="1"/>
</dbReference>
<dbReference type="Gene3D" id="3.40.50.620">
    <property type="entry name" value="HUPs"/>
    <property type="match status" value="1"/>
</dbReference>
<dbReference type="Gene3D" id="2.40.240.10">
    <property type="entry name" value="Ribosomal Protein L25, Chain P"/>
    <property type="match status" value="2"/>
</dbReference>
<dbReference type="HAMAP" id="MF_00126">
    <property type="entry name" value="Gln_tRNA_synth"/>
    <property type="match status" value="1"/>
</dbReference>
<dbReference type="InterPro" id="IPR001412">
    <property type="entry name" value="aa-tRNA-synth_I_CS"/>
</dbReference>
<dbReference type="InterPro" id="IPR004514">
    <property type="entry name" value="Gln-tRNA-synth"/>
</dbReference>
<dbReference type="InterPro" id="IPR050132">
    <property type="entry name" value="Gln/Glu-tRNA_Ligase"/>
</dbReference>
<dbReference type="InterPro" id="IPR022861">
    <property type="entry name" value="Gln_tRNA_ligase_bac"/>
</dbReference>
<dbReference type="InterPro" id="IPR000924">
    <property type="entry name" value="Glu/Gln-tRNA-synth"/>
</dbReference>
<dbReference type="InterPro" id="IPR020058">
    <property type="entry name" value="Glu/Gln-tRNA-synth_Ib_cat-dom"/>
</dbReference>
<dbReference type="InterPro" id="IPR020059">
    <property type="entry name" value="Glu/Gln-tRNA-synth_Ib_codon-bd"/>
</dbReference>
<dbReference type="InterPro" id="IPR020061">
    <property type="entry name" value="Glu_tRNA_lig_a-bdl"/>
</dbReference>
<dbReference type="InterPro" id="IPR020056">
    <property type="entry name" value="Rbsml_bL25/Gln-tRNA_synth_N"/>
</dbReference>
<dbReference type="InterPro" id="IPR011035">
    <property type="entry name" value="Ribosomal_bL25/Gln-tRNA_synth"/>
</dbReference>
<dbReference type="InterPro" id="IPR014729">
    <property type="entry name" value="Rossmann-like_a/b/a_fold"/>
</dbReference>
<dbReference type="InterPro" id="IPR049437">
    <property type="entry name" value="tRNA-synt_1c_C2"/>
</dbReference>
<dbReference type="NCBIfam" id="TIGR00440">
    <property type="entry name" value="glnS"/>
    <property type="match status" value="1"/>
</dbReference>
<dbReference type="NCBIfam" id="NF011291">
    <property type="entry name" value="PRK14703.1"/>
    <property type="match status" value="1"/>
</dbReference>
<dbReference type="PANTHER" id="PTHR43097:SF5">
    <property type="entry name" value="GLUTAMATE--TRNA LIGASE"/>
    <property type="match status" value="1"/>
</dbReference>
<dbReference type="PANTHER" id="PTHR43097">
    <property type="entry name" value="GLUTAMINE-TRNA LIGASE"/>
    <property type="match status" value="1"/>
</dbReference>
<dbReference type="Pfam" id="PF00749">
    <property type="entry name" value="tRNA-synt_1c"/>
    <property type="match status" value="1"/>
</dbReference>
<dbReference type="Pfam" id="PF03950">
    <property type="entry name" value="tRNA-synt_1c_C"/>
    <property type="match status" value="1"/>
</dbReference>
<dbReference type="Pfam" id="PF20974">
    <property type="entry name" value="tRNA-synt_1c_C2"/>
    <property type="match status" value="1"/>
</dbReference>
<dbReference type="PRINTS" id="PR00987">
    <property type="entry name" value="TRNASYNTHGLU"/>
</dbReference>
<dbReference type="SUPFAM" id="SSF52374">
    <property type="entry name" value="Nucleotidylyl transferase"/>
    <property type="match status" value="1"/>
</dbReference>
<dbReference type="SUPFAM" id="SSF50715">
    <property type="entry name" value="Ribosomal protein L25-like"/>
    <property type="match status" value="1"/>
</dbReference>
<dbReference type="PROSITE" id="PS00178">
    <property type="entry name" value="AA_TRNA_LIGASE_I"/>
    <property type="match status" value="1"/>
</dbReference>
<organism>
    <name type="scientific">Pseudomonas putida (strain ATCC 47054 / DSM 6125 / CFBP 8728 / NCIMB 11950 / KT2440)</name>
    <dbReference type="NCBI Taxonomy" id="160488"/>
    <lineage>
        <taxon>Bacteria</taxon>
        <taxon>Pseudomonadati</taxon>
        <taxon>Pseudomonadota</taxon>
        <taxon>Gammaproteobacteria</taxon>
        <taxon>Pseudomonadales</taxon>
        <taxon>Pseudomonadaceae</taxon>
        <taxon>Pseudomonas</taxon>
    </lineage>
</organism>
<protein>
    <recommendedName>
        <fullName evidence="1">Glutamine--tRNA ligase</fullName>
        <ecNumber evidence="1">6.1.1.18</ecNumber>
    </recommendedName>
    <alternativeName>
        <fullName evidence="1">Glutaminyl-tRNA synthetase</fullName>
        <shortName evidence="1">GlnRS</shortName>
    </alternativeName>
</protein>
<gene>
    <name evidence="1" type="primary">glnS</name>
    <name type="ordered locus">PP_2904</name>
</gene>
<name>SYQ_PSEPK</name>